<feature type="chain" id="PRO_0000147889" description="Phosphoglucosamine mutase">
    <location>
        <begin position="1"/>
        <end position="445"/>
    </location>
</feature>
<feature type="active site" description="Phosphoserine intermediate" evidence="1">
    <location>
        <position position="102"/>
    </location>
</feature>
<feature type="binding site" description="via phosphate group" evidence="1">
    <location>
        <position position="102"/>
    </location>
    <ligand>
        <name>Mg(2+)</name>
        <dbReference type="ChEBI" id="CHEBI:18420"/>
    </ligand>
</feature>
<feature type="binding site" evidence="1">
    <location>
        <position position="241"/>
    </location>
    <ligand>
        <name>Mg(2+)</name>
        <dbReference type="ChEBI" id="CHEBI:18420"/>
    </ligand>
</feature>
<feature type="binding site" evidence="1">
    <location>
        <position position="243"/>
    </location>
    <ligand>
        <name>Mg(2+)</name>
        <dbReference type="ChEBI" id="CHEBI:18420"/>
    </ligand>
</feature>
<feature type="binding site" evidence="1">
    <location>
        <position position="245"/>
    </location>
    <ligand>
        <name>Mg(2+)</name>
        <dbReference type="ChEBI" id="CHEBI:18420"/>
    </ligand>
</feature>
<feature type="modified residue" description="Phosphoserine" evidence="1">
    <location>
        <position position="102"/>
    </location>
</feature>
<dbReference type="EC" id="5.4.2.10" evidence="1"/>
<dbReference type="EMBL" id="AE014075">
    <property type="protein sequence ID" value="AAN82373.1"/>
    <property type="molecule type" value="Genomic_DNA"/>
</dbReference>
<dbReference type="RefSeq" id="WP_000071137.1">
    <property type="nucleotide sequence ID" value="NZ_CP051263.1"/>
</dbReference>
<dbReference type="SMR" id="Q8FD84"/>
<dbReference type="STRING" id="199310.c3932"/>
<dbReference type="GeneID" id="93778805"/>
<dbReference type="KEGG" id="ecc:c3932"/>
<dbReference type="eggNOG" id="COG1109">
    <property type="taxonomic scope" value="Bacteria"/>
</dbReference>
<dbReference type="HOGENOM" id="CLU_016950_7_0_6"/>
<dbReference type="BioCyc" id="ECOL199310:C3932-MONOMER"/>
<dbReference type="Proteomes" id="UP000001410">
    <property type="component" value="Chromosome"/>
</dbReference>
<dbReference type="GO" id="GO:0005829">
    <property type="term" value="C:cytosol"/>
    <property type="evidence" value="ECO:0007669"/>
    <property type="project" value="TreeGrafter"/>
</dbReference>
<dbReference type="GO" id="GO:0000287">
    <property type="term" value="F:magnesium ion binding"/>
    <property type="evidence" value="ECO:0007669"/>
    <property type="project" value="UniProtKB-UniRule"/>
</dbReference>
<dbReference type="GO" id="GO:0008966">
    <property type="term" value="F:phosphoglucosamine mutase activity"/>
    <property type="evidence" value="ECO:0007669"/>
    <property type="project" value="UniProtKB-UniRule"/>
</dbReference>
<dbReference type="GO" id="GO:0004615">
    <property type="term" value="F:phosphomannomutase activity"/>
    <property type="evidence" value="ECO:0007669"/>
    <property type="project" value="TreeGrafter"/>
</dbReference>
<dbReference type="GO" id="GO:0005975">
    <property type="term" value="P:carbohydrate metabolic process"/>
    <property type="evidence" value="ECO:0007669"/>
    <property type="project" value="InterPro"/>
</dbReference>
<dbReference type="GO" id="GO:0009252">
    <property type="term" value="P:peptidoglycan biosynthetic process"/>
    <property type="evidence" value="ECO:0007669"/>
    <property type="project" value="TreeGrafter"/>
</dbReference>
<dbReference type="GO" id="GO:0006048">
    <property type="term" value="P:UDP-N-acetylglucosamine biosynthetic process"/>
    <property type="evidence" value="ECO:0007669"/>
    <property type="project" value="TreeGrafter"/>
</dbReference>
<dbReference type="CDD" id="cd05802">
    <property type="entry name" value="GlmM"/>
    <property type="match status" value="1"/>
</dbReference>
<dbReference type="FunFam" id="3.30.310.50:FF:000001">
    <property type="entry name" value="Phosphoglucosamine mutase"/>
    <property type="match status" value="1"/>
</dbReference>
<dbReference type="FunFam" id="3.40.120.10:FF:000001">
    <property type="entry name" value="Phosphoglucosamine mutase"/>
    <property type="match status" value="1"/>
</dbReference>
<dbReference type="FunFam" id="3.40.120.10:FF:000002">
    <property type="entry name" value="Phosphoglucosamine mutase"/>
    <property type="match status" value="1"/>
</dbReference>
<dbReference type="Gene3D" id="3.40.120.10">
    <property type="entry name" value="Alpha-D-Glucose-1,6-Bisphosphate, subunit A, domain 3"/>
    <property type="match status" value="3"/>
</dbReference>
<dbReference type="Gene3D" id="3.30.310.50">
    <property type="entry name" value="Alpha-D-phosphohexomutase, C-terminal domain"/>
    <property type="match status" value="1"/>
</dbReference>
<dbReference type="HAMAP" id="MF_01554_B">
    <property type="entry name" value="GlmM_B"/>
    <property type="match status" value="1"/>
</dbReference>
<dbReference type="InterPro" id="IPR005844">
    <property type="entry name" value="A-D-PHexomutase_a/b/a-I"/>
</dbReference>
<dbReference type="InterPro" id="IPR016055">
    <property type="entry name" value="A-D-PHexomutase_a/b/a-I/II/III"/>
</dbReference>
<dbReference type="InterPro" id="IPR005845">
    <property type="entry name" value="A-D-PHexomutase_a/b/a-II"/>
</dbReference>
<dbReference type="InterPro" id="IPR005846">
    <property type="entry name" value="A-D-PHexomutase_a/b/a-III"/>
</dbReference>
<dbReference type="InterPro" id="IPR005843">
    <property type="entry name" value="A-D-PHexomutase_C"/>
</dbReference>
<dbReference type="InterPro" id="IPR036900">
    <property type="entry name" value="A-D-PHexomutase_C_sf"/>
</dbReference>
<dbReference type="InterPro" id="IPR016066">
    <property type="entry name" value="A-D-PHexomutase_CS"/>
</dbReference>
<dbReference type="InterPro" id="IPR005841">
    <property type="entry name" value="Alpha-D-phosphohexomutase_SF"/>
</dbReference>
<dbReference type="InterPro" id="IPR006352">
    <property type="entry name" value="GlmM_bact"/>
</dbReference>
<dbReference type="InterPro" id="IPR050060">
    <property type="entry name" value="Phosphoglucosamine_mutase"/>
</dbReference>
<dbReference type="NCBIfam" id="TIGR01455">
    <property type="entry name" value="glmM"/>
    <property type="match status" value="1"/>
</dbReference>
<dbReference type="NCBIfam" id="NF008139">
    <property type="entry name" value="PRK10887.1"/>
    <property type="match status" value="1"/>
</dbReference>
<dbReference type="PANTHER" id="PTHR42946:SF1">
    <property type="entry name" value="PHOSPHOGLUCOMUTASE (ALPHA-D-GLUCOSE-1,6-BISPHOSPHATE-DEPENDENT)"/>
    <property type="match status" value="1"/>
</dbReference>
<dbReference type="PANTHER" id="PTHR42946">
    <property type="entry name" value="PHOSPHOHEXOSE MUTASE"/>
    <property type="match status" value="1"/>
</dbReference>
<dbReference type="Pfam" id="PF02878">
    <property type="entry name" value="PGM_PMM_I"/>
    <property type="match status" value="1"/>
</dbReference>
<dbReference type="Pfam" id="PF02879">
    <property type="entry name" value="PGM_PMM_II"/>
    <property type="match status" value="1"/>
</dbReference>
<dbReference type="Pfam" id="PF02880">
    <property type="entry name" value="PGM_PMM_III"/>
    <property type="match status" value="1"/>
</dbReference>
<dbReference type="Pfam" id="PF00408">
    <property type="entry name" value="PGM_PMM_IV"/>
    <property type="match status" value="1"/>
</dbReference>
<dbReference type="PRINTS" id="PR00509">
    <property type="entry name" value="PGMPMM"/>
</dbReference>
<dbReference type="SUPFAM" id="SSF55957">
    <property type="entry name" value="Phosphoglucomutase, C-terminal domain"/>
    <property type="match status" value="1"/>
</dbReference>
<dbReference type="SUPFAM" id="SSF53738">
    <property type="entry name" value="Phosphoglucomutase, first 3 domains"/>
    <property type="match status" value="3"/>
</dbReference>
<dbReference type="PROSITE" id="PS00710">
    <property type="entry name" value="PGM_PMM"/>
    <property type="match status" value="1"/>
</dbReference>
<accession>Q8FD84</accession>
<keyword id="KW-0413">Isomerase</keyword>
<keyword id="KW-0460">Magnesium</keyword>
<keyword id="KW-0479">Metal-binding</keyword>
<keyword id="KW-0597">Phosphoprotein</keyword>
<keyword id="KW-1185">Reference proteome</keyword>
<comment type="function">
    <text evidence="1">Catalyzes the conversion of glucosamine-6-phosphate to glucosamine-1-phosphate.</text>
</comment>
<comment type="catalytic activity">
    <reaction evidence="1">
        <text>alpha-D-glucosamine 1-phosphate = D-glucosamine 6-phosphate</text>
        <dbReference type="Rhea" id="RHEA:23424"/>
        <dbReference type="ChEBI" id="CHEBI:58516"/>
        <dbReference type="ChEBI" id="CHEBI:58725"/>
        <dbReference type="EC" id="5.4.2.10"/>
    </reaction>
</comment>
<comment type="cofactor">
    <cofactor evidence="1">
        <name>Mg(2+)</name>
        <dbReference type="ChEBI" id="CHEBI:18420"/>
    </cofactor>
    <text evidence="1">Binds 1 Mg(2+) ion per subunit.</text>
</comment>
<comment type="PTM">
    <text evidence="1">Activated by phosphorylation.</text>
</comment>
<comment type="similarity">
    <text evidence="1">Belongs to the phosphohexose mutase family.</text>
</comment>
<protein>
    <recommendedName>
        <fullName evidence="1">Phosphoglucosamine mutase</fullName>
        <ecNumber evidence="1">5.4.2.10</ecNumber>
    </recommendedName>
</protein>
<proteinExistence type="inferred from homology"/>
<reference key="1">
    <citation type="journal article" date="2002" name="Proc. Natl. Acad. Sci. U.S.A.">
        <title>Extensive mosaic structure revealed by the complete genome sequence of uropathogenic Escherichia coli.</title>
        <authorList>
            <person name="Welch R.A."/>
            <person name="Burland V."/>
            <person name="Plunkett G. III"/>
            <person name="Redford P."/>
            <person name="Roesch P."/>
            <person name="Rasko D."/>
            <person name="Buckles E.L."/>
            <person name="Liou S.-R."/>
            <person name="Boutin A."/>
            <person name="Hackett J."/>
            <person name="Stroud D."/>
            <person name="Mayhew G.F."/>
            <person name="Rose D.J."/>
            <person name="Zhou S."/>
            <person name="Schwartz D.C."/>
            <person name="Perna N.T."/>
            <person name="Mobley H.L.T."/>
            <person name="Donnenberg M.S."/>
            <person name="Blattner F.R."/>
        </authorList>
    </citation>
    <scope>NUCLEOTIDE SEQUENCE [LARGE SCALE GENOMIC DNA]</scope>
    <source>
        <strain>CFT073 / ATCC 700928 / UPEC</strain>
    </source>
</reference>
<organism>
    <name type="scientific">Escherichia coli O6:H1 (strain CFT073 / ATCC 700928 / UPEC)</name>
    <dbReference type="NCBI Taxonomy" id="199310"/>
    <lineage>
        <taxon>Bacteria</taxon>
        <taxon>Pseudomonadati</taxon>
        <taxon>Pseudomonadota</taxon>
        <taxon>Gammaproteobacteria</taxon>
        <taxon>Enterobacterales</taxon>
        <taxon>Enterobacteriaceae</taxon>
        <taxon>Escherichia</taxon>
    </lineage>
</organism>
<evidence type="ECO:0000255" key="1">
    <source>
        <dbReference type="HAMAP-Rule" id="MF_01554"/>
    </source>
</evidence>
<sequence length="445" mass="47517">MSNRKYFGTDGIRGRVGDAPITPDFVLKLGWAAGKVLARHGSRKIIIGKDTRISGYMLESALEAGLAAAGLSALFTGPMPTPAVAYLTRTFRAEAGIVISASHNPFYDNGIKFFSIDGTKLPDAVEEAIEAEMEKEISCVDSAELGKASRIVDAAGRYIEFCKATFPNELSLSELKIVVDCANGATYHIAPNVLRELGANVIAIGCEPNGVNINAEVGATDVRALQARVLAEKADLGIAFDGDGDRVIMVDHEGNKVDGDQIMYIIAREGLRQGQLRGGAVGTLMSNMGLELALKQLGIPFARAKVGDRYVLEKMQEKGWRIGAENSGHVILLDKTTTGDGIVAGLQVLAAMARNHMSLHDLCSGMKMFPQILVNVRYTAGSGDPLEHESVKAVTAEVEAALGSRGRVLLRKSGTEPLIRVMVEGEDEAQVTEFAHRIADAVKAV</sequence>
<name>GLMM_ECOL6</name>
<gene>
    <name evidence="1" type="primary">glmM</name>
    <name type="ordered locus">c3932</name>
</gene>